<dbReference type="EMBL" id="AAFI02000040">
    <property type="protein sequence ID" value="EAL66768.1"/>
    <property type="molecule type" value="Genomic_DNA"/>
</dbReference>
<dbReference type="RefSeq" id="XP_640749.1">
    <property type="nucleotide sequence ID" value="XM_635657.1"/>
</dbReference>
<dbReference type="SMR" id="Q54U16"/>
<dbReference type="PaxDb" id="44689-DDB0204160"/>
<dbReference type="EnsemblProtists" id="EAL66768">
    <property type="protein sequence ID" value="EAL66768"/>
    <property type="gene ID" value="DDB_G0281365"/>
</dbReference>
<dbReference type="GeneID" id="8623028"/>
<dbReference type="KEGG" id="ddi:DDB_G0281365"/>
<dbReference type="dictyBase" id="DDB_G0281365"/>
<dbReference type="VEuPathDB" id="AmoebaDB:DDB_G0281365"/>
<dbReference type="HOGENOM" id="CLU_3161080_0_0_1"/>
<dbReference type="InParanoid" id="Q54U16"/>
<dbReference type="PRO" id="PR:Q54U16"/>
<dbReference type="Proteomes" id="UP000002195">
    <property type="component" value="Chromosome 3"/>
</dbReference>
<reference key="1">
    <citation type="journal article" date="2005" name="Nature">
        <title>The genome of the social amoeba Dictyostelium discoideum.</title>
        <authorList>
            <person name="Eichinger L."/>
            <person name="Pachebat J.A."/>
            <person name="Gloeckner G."/>
            <person name="Rajandream M.A."/>
            <person name="Sucgang R."/>
            <person name="Berriman M."/>
            <person name="Song J."/>
            <person name="Olsen R."/>
            <person name="Szafranski K."/>
            <person name="Xu Q."/>
            <person name="Tunggal B."/>
            <person name="Kummerfeld S."/>
            <person name="Madera M."/>
            <person name="Konfortov B.A."/>
            <person name="Rivero F."/>
            <person name="Bankier A.T."/>
            <person name="Lehmann R."/>
            <person name="Hamlin N."/>
            <person name="Davies R."/>
            <person name="Gaudet P."/>
            <person name="Fey P."/>
            <person name="Pilcher K."/>
            <person name="Chen G."/>
            <person name="Saunders D."/>
            <person name="Sodergren E.J."/>
            <person name="Davis P."/>
            <person name="Kerhornou A."/>
            <person name="Nie X."/>
            <person name="Hall N."/>
            <person name="Anjard C."/>
            <person name="Hemphill L."/>
            <person name="Bason N."/>
            <person name="Farbrother P."/>
            <person name="Desany B."/>
            <person name="Just E."/>
            <person name="Morio T."/>
            <person name="Rost R."/>
            <person name="Churcher C.M."/>
            <person name="Cooper J."/>
            <person name="Haydock S."/>
            <person name="van Driessche N."/>
            <person name="Cronin A."/>
            <person name="Goodhead I."/>
            <person name="Muzny D.M."/>
            <person name="Mourier T."/>
            <person name="Pain A."/>
            <person name="Lu M."/>
            <person name="Harper D."/>
            <person name="Lindsay R."/>
            <person name="Hauser H."/>
            <person name="James K.D."/>
            <person name="Quiles M."/>
            <person name="Madan Babu M."/>
            <person name="Saito T."/>
            <person name="Buchrieser C."/>
            <person name="Wardroper A."/>
            <person name="Felder M."/>
            <person name="Thangavelu M."/>
            <person name="Johnson D."/>
            <person name="Knights A."/>
            <person name="Loulseged H."/>
            <person name="Mungall K.L."/>
            <person name="Oliver K."/>
            <person name="Price C."/>
            <person name="Quail M.A."/>
            <person name="Urushihara H."/>
            <person name="Hernandez J."/>
            <person name="Rabbinowitsch E."/>
            <person name="Steffen D."/>
            <person name="Sanders M."/>
            <person name="Ma J."/>
            <person name="Kohara Y."/>
            <person name="Sharp S."/>
            <person name="Simmonds M.N."/>
            <person name="Spiegler S."/>
            <person name="Tivey A."/>
            <person name="Sugano S."/>
            <person name="White B."/>
            <person name="Walker D."/>
            <person name="Woodward J.R."/>
            <person name="Winckler T."/>
            <person name="Tanaka Y."/>
            <person name="Shaulsky G."/>
            <person name="Schleicher M."/>
            <person name="Weinstock G.M."/>
            <person name="Rosenthal A."/>
            <person name="Cox E.C."/>
            <person name="Chisholm R.L."/>
            <person name="Gibbs R.A."/>
            <person name="Loomis W.F."/>
            <person name="Platzer M."/>
            <person name="Kay R.R."/>
            <person name="Williams J.G."/>
            <person name="Dear P.H."/>
            <person name="Noegel A.A."/>
            <person name="Barrell B.G."/>
            <person name="Kuspa A."/>
        </authorList>
    </citation>
    <scope>NUCLEOTIDE SEQUENCE [LARGE SCALE GENOMIC DNA]</scope>
    <source>
        <strain>AX4</strain>
    </source>
</reference>
<name>Y4160_DICDI</name>
<proteinExistence type="predicted"/>
<gene>
    <name type="ORF">DDB_G0281365</name>
</gene>
<protein>
    <recommendedName>
        <fullName>Putative uncharacterized protein DDB_G0281365</fullName>
    </recommendedName>
</protein>
<accession>Q54U16</accession>
<sequence>MKIYVIWSFYVLATINKQDYLPKLEFIFHKICIMFKSYYKEYEFHIKP</sequence>
<keyword id="KW-1185">Reference proteome</keyword>
<feature type="chain" id="PRO_0000352408" description="Putative uncharacterized protein DDB_G0281365">
    <location>
        <begin position="1"/>
        <end position="48"/>
    </location>
</feature>
<organism>
    <name type="scientific">Dictyostelium discoideum</name>
    <name type="common">Social amoeba</name>
    <dbReference type="NCBI Taxonomy" id="44689"/>
    <lineage>
        <taxon>Eukaryota</taxon>
        <taxon>Amoebozoa</taxon>
        <taxon>Evosea</taxon>
        <taxon>Eumycetozoa</taxon>
        <taxon>Dictyostelia</taxon>
        <taxon>Dictyosteliales</taxon>
        <taxon>Dictyosteliaceae</taxon>
        <taxon>Dictyostelium</taxon>
    </lineage>
</organism>